<comment type="function">
    <text evidence="1">Cell wall formation.</text>
</comment>
<comment type="catalytic activity">
    <reaction evidence="1">
        <text>UDP-N-acetyl-alpha-D-muramate + L-alanine + ATP = UDP-N-acetyl-alpha-D-muramoyl-L-alanine + ADP + phosphate + H(+)</text>
        <dbReference type="Rhea" id="RHEA:23372"/>
        <dbReference type="ChEBI" id="CHEBI:15378"/>
        <dbReference type="ChEBI" id="CHEBI:30616"/>
        <dbReference type="ChEBI" id="CHEBI:43474"/>
        <dbReference type="ChEBI" id="CHEBI:57972"/>
        <dbReference type="ChEBI" id="CHEBI:70757"/>
        <dbReference type="ChEBI" id="CHEBI:83898"/>
        <dbReference type="ChEBI" id="CHEBI:456216"/>
        <dbReference type="EC" id="6.3.2.8"/>
    </reaction>
</comment>
<comment type="pathway">
    <text evidence="1">Cell wall biogenesis; peptidoglycan biosynthesis.</text>
</comment>
<comment type="subcellular location">
    <subcellularLocation>
        <location evidence="1">Cytoplasm</location>
    </subcellularLocation>
</comment>
<comment type="similarity">
    <text evidence="1">Belongs to the MurCDEF family.</text>
</comment>
<reference key="1">
    <citation type="journal article" date="2004" name="Science">
        <title>A predator unmasked: life cycle of Bdellovibrio bacteriovorus from a genomic perspective.</title>
        <authorList>
            <person name="Rendulic S."/>
            <person name="Jagtap P."/>
            <person name="Rosinus A."/>
            <person name="Eppinger M."/>
            <person name="Baar C."/>
            <person name="Lanz C."/>
            <person name="Keller H."/>
            <person name="Lambert C."/>
            <person name="Evans K.J."/>
            <person name="Goesmann A."/>
            <person name="Meyer F."/>
            <person name="Sockett R.E."/>
            <person name="Schuster S.C."/>
        </authorList>
    </citation>
    <scope>NUCLEOTIDE SEQUENCE [LARGE SCALE GENOMIC DNA]</scope>
    <source>
        <strain>ATCC 15356 / DSM 50701 / NCIMB 9529 / HD100</strain>
    </source>
</reference>
<accession>P61676</accession>
<feature type="chain" id="PRO_0000182058" description="UDP-N-acetylmuramate--L-alanine ligase">
    <location>
        <begin position="1"/>
        <end position="453"/>
    </location>
</feature>
<feature type="binding site" evidence="1">
    <location>
        <begin position="112"/>
        <end position="118"/>
    </location>
    <ligand>
        <name>ATP</name>
        <dbReference type="ChEBI" id="CHEBI:30616"/>
    </ligand>
</feature>
<protein>
    <recommendedName>
        <fullName evidence="1">UDP-N-acetylmuramate--L-alanine ligase</fullName>
        <ecNumber evidence="1">6.3.2.8</ecNumber>
    </recommendedName>
    <alternativeName>
        <fullName evidence="1">UDP-N-acetylmuramoyl-L-alanine synthetase</fullName>
    </alternativeName>
</protein>
<proteinExistence type="inferred from homology"/>
<gene>
    <name evidence="1" type="primary">murC</name>
    <name type="ordered locus">Bd3196</name>
</gene>
<keyword id="KW-0067">ATP-binding</keyword>
<keyword id="KW-0131">Cell cycle</keyword>
<keyword id="KW-0132">Cell division</keyword>
<keyword id="KW-0133">Cell shape</keyword>
<keyword id="KW-0961">Cell wall biogenesis/degradation</keyword>
<keyword id="KW-0963">Cytoplasm</keyword>
<keyword id="KW-0436">Ligase</keyword>
<keyword id="KW-0547">Nucleotide-binding</keyword>
<keyword id="KW-0573">Peptidoglycan synthesis</keyword>
<keyword id="KW-1185">Reference proteome</keyword>
<sequence>MKLQHAKFHFVGVGGIGMCGLAELLHNIGAKVSGSDQAENANTERLKELGVKVFKGHASSNVGDADVVVYSSAIQYGNPEISEARARQIPLIPRAEALAEIMRLKRGIAVAGTHGKTTTTSMTSAIFLEANLSPTIVIGGRFELIKSTAMLGSGEWLVAEADESDGSFHKLSPEIAIITNIDSDHLEHFKTFENVQKSFHDFALKVPFYGKVIVCGDDPLVRQIFENFPKRILFYGFDEKNDLVVTGEHGHYAVHRNDRLLGTKHLVGEFDLKVPGRHNALNAVAAICAGVAAGIPFATCAKGLQRYEGVDRRFHFKGEKKGIKVYDDYGHHPTEVRAVLQAFREKYPKQRLVVFFQPHRYSRTQHCWHDFTTAFMEADQVLLTDIYPAGEAPIPGVTSEKLASEMKHEHAQYFVRDDKATQKILGMLKEGDVFVTLGAGDGWKLGLEVLNQL</sequence>
<organism>
    <name type="scientific">Bdellovibrio bacteriovorus (strain ATCC 15356 / DSM 50701 / NCIMB 9529 / HD100)</name>
    <dbReference type="NCBI Taxonomy" id="264462"/>
    <lineage>
        <taxon>Bacteria</taxon>
        <taxon>Pseudomonadati</taxon>
        <taxon>Bdellovibrionota</taxon>
        <taxon>Bdellovibrionia</taxon>
        <taxon>Bdellovibrionales</taxon>
        <taxon>Pseudobdellovibrionaceae</taxon>
        <taxon>Bdellovibrio</taxon>
    </lineage>
</organism>
<name>MURC_BDEBA</name>
<evidence type="ECO:0000255" key="1">
    <source>
        <dbReference type="HAMAP-Rule" id="MF_00046"/>
    </source>
</evidence>
<dbReference type="EC" id="6.3.2.8" evidence="1"/>
<dbReference type="EMBL" id="BX842654">
    <property type="protein sequence ID" value="CAE80951.1"/>
    <property type="molecule type" value="Genomic_DNA"/>
</dbReference>
<dbReference type="RefSeq" id="WP_011165555.1">
    <property type="nucleotide sequence ID" value="NC_005363.1"/>
</dbReference>
<dbReference type="SMR" id="P61676"/>
<dbReference type="STRING" id="264462.Bd3196"/>
<dbReference type="GeneID" id="93014038"/>
<dbReference type="KEGG" id="bba:Bd3196"/>
<dbReference type="eggNOG" id="COG0773">
    <property type="taxonomic scope" value="Bacteria"/>
</dbReference>
<dbReference type="HOGENOM" id="CLU_028104_2_2_7"/>
<dbReference type="UniPathway" id="UPA00219"/>
<dbReference type="Proteomes" id="UP000008080">
    <property type="component" value="Chromosome"/>
</dbReference>
<dbReference type="GO" id="GO:0005737">
    <property type="term" value="C:cytoplasm"/>
    <property type="evidence" value="ECO:0007669"/>
    <property type="project" value="UniProtKB-SubCell"/>
</dbReference>
<dbReference type="GO" id="GO:0005524">
    <property type="term" value="F:ATP binding"/>
    <property type="evidence" value="ECO:0007669"/>
    <property type="project" value="UniProtKB-UniRule"/>
</dbReference>
<dbReference type="GO" id="GO:0008763">
    <property type="term" value="F:UDP-N-acetylmuramate-L-alanine ligase activity"/>
    <property type="evidence" value="ECO:0007669"/>
    <property type="project" value="UniProtKB-UniRule"/>
</dbReference>
<dbReference type="GO" id="GO:0051301">
    <property type="term" value="P:cell division"/>
    <property type="evidence" value="ECO:0007669"/>
    <property type="project" value="UniProtKB-KW"/>
</dbReference>
<dbReference type="GO" id="GO:0071555">
    <property type="term" value="P:cell wall organization"/>
    <property type="evidence" value="ECO:0007669"/>
    <property type="project" value="UniProtKB-KW"/>
</dbReference>
<dbReference type="GO" id="GO:0009252">
    <property type="term" value="P:peptidoglycan biosynthetic process"/>
    <property type="evidence" value="ECO:0007669"/>
    <property type="project" value="UniProtKB-UniRule"/>
</dbReference>
<dbReference type="GO" id="GO:0008360">
    <property type="term" value="P:regulation of cell shape"/>
    <property type="evidence" value="ECO:0007669"/>
    <property type="project" value="UniProtKB-KW"/>
</dbReference>
<dbReference type="Gene3D" id="3.90.190.20">
    <property type="entry name" value="Mur ligase, C-terminal domain"/>
    <property type="match status" value="1"/>
</dbReference>
<dbReference type="Gene3D" id="3.40.1190.10">
    <property type="entry name" value="Mur-like, catalytic domain"/>
    <property type="match status" value="1"/>
</dbReference>
<dbReference type="Gene3D" id="3.40.50.720">
    <property type="entry name" value="NAD(P)-binding Rossmann-like Domain"/>
    <property type="match status" value="1"/>
</dbReference>
<dbReference type="HAMAP" id="MF_00046">
    <property type="entry name" value="MurC"/>
    <property type="match status" value="1"/>
</dbReference>
<dbReference type="InterPro" id="IPR036565">
    <property type="entry name" value="Mur-like_cat_sf"/>
</dbReference>
<dbReference type="InterPro" id="IPR004101">
    <property type="entry name" value="Mur_ligase_C"/>
</dbReference>
<dbReference type="InterPro" id="IPR036615">
    <property type="entry name" value="Mur_ligase_C_dom_sf"/>
</dbReference>
<dbReference type="InterPro" id="IPR013221">
    <property type="entry name" value="Mur_ligase_cen"/>
</dbReference>
<dbReference type="InterPro" id="IPR000713">
    <property type="entry name" value="Mur_ligase_N"/>
</dbReference>
<dbReference type="InterPro" id="IPR050061">
    <property type="entry name" value="MurCDEF_pg_biosynth"/>
</dbReference>
<dbReference type="InterPro" id="IPR005758">
    <property type="entry name" value="UDP-N-AcMur_Ala_ligase_MurC"/>
</dbReference>
<dbReference type="NCBIfam" id="TIGR01082">
    <property type="entry name" value="murC"/>
    <property type="match status" value="1"/>
</dbReference>
<dbReference type="PANTHER" id="PTHR43445:SF3">
    <property type="entry name" value="UDP-N-ACETYLMURAMATE--L-ALANINE LIGASE"/>
    <property type="match status" value="1"/>
</dbReference>
<dbReference type="PANTHER" id="PTHR43445">
    <property type="entry name" value="UDP-N-ACETYLMURAMATE--L-ALANINE LIGASE-RELATED"/>
    <property type="match status" value="1"/>
</dbReference>
<dbReference type="Pfam" id="PF01225">
    <property type="entry name" value="Mur_ligase"/>
    <property type="match status" value="1"/>
</dbReference>
<dbReference type="Pfam" id="PF02875">
    <property type="entry name" value="Mur_ligase_C"/>
    <property type="match status" value="1"/>
</dbReference>
<dbReference type="Pfam" id="PF08245">
    <property type="entry name" value="Mur_ligase_M"/>
    <property type="match status" value="1"/>
</dbReference>
<dbReference type="SUPFAM" id="SSF51984">
    <property type="entry name" value="MurCD N-terminal domain"/>
    <property type="match status" value="1"/>
</dbReference>
<dbReference type="SUPFAM" id="SSF53623">
    <property type="entry name" value="MurD-like peptide ligases, catalytic domain"/>
    <property type="match status" value="1"/>
</dbReference>
<dbReference type="SUPFAM" id="SSF53244">
    <property type="entry name" value="MurD-like peptide ligases, peptide-binding domain"/>
    <property type="match status" value="1"/>
</dbReference>